<protein>
    <recommendedName>
        <fullName>Lectin-4</fullName>
    </recommendedName>
    <alternativeName>
        <fullName>GS4</fullName>
    </alternativeName>
    <alternativeName>
        <fullName>Lectin IV</fullName>
    </alternativeName>
</protein>
<reference key="1">
    <citation type="journal article" date="1993" name="J. Mol. Biol.">
        <title>Structures of the lectin IV of Griffonia simplicifolia and its complex with the Lewis b human blood group determinant at 2.0-A resolution.</title>
        <authorList>
            <person name="Delbaere L.T.J."/>
            <person name="Vandonselaar M."/>
            <person name="Prasad L."/>
            <person name="Quail J.W."/>
            <person name="Wilson K.S."/>
            <person name="Dauter Z."/>
        </authorList>
    </citation>
    <scope>PROTEIN SEQUENCE</scope>
    <scope>X-RAY CRYSTALLOGRAPHY (2.0 ANGSTROMS) IN COMPLEX WITH CARBOHYDRATE; CALCIUM AND MANGANESE IONS</scope>
</reference>
<reference key="2">
    <citation type="journal article" date="1990" name="Biochem. J.">
        <title>Molecular-mass heterogeneity of Griffonia simplicifolia lectin IV subunits. Differences in the oligosaccharide moieties in the N-terminal region.</title>
        <authorList>
            <person name="Nikrad P.V."/>
            <person name="Pearlstone J.R."/>
            <person name="Carpenter M.R."/>
            <person name="Lemieux R.U."/>
            <person name="Smillie L.B."/>
        </authorList>
    </citation>
    <scope>PROTEIN SEQUENCE OF 1-62</scope>
    <scope>PYROGLUTAMATE FORMATION AT GLN-1</scope>
    <source>
        <tissue>Seed</tissue>
    </source>
</reference>
<sequence length="243" mass="26810">QNTVNFTYPDFWSYSLKNGTEITFLGDATRIPGALQLTKTDANGNPVRSSAGQASYSEPVFLWDSTGKAASFYTSFTFLLKNYGAPTADGLAFFLAPVDSSVKDYGGFLGLFRHETAADPSKNQVVAVEFDTWINKDWNDPPYPHIGIDVNSIVSVATTRWENDDAYGSSIATAHITYDARSKILTVLLSYEHGRDYILSHVVDLAKVLPQKVRIGFSAGVGYDEVTYILSWHFFSTLDGTNK</sequence>
<evidence type="ECO:0000269" key="1">
    <source>
    </source>
</evidence>
<evidence type="ECO:0000305" key="2"/>
<evidence type="ECO:0007829" key="3">
    <source>
        <dbReference type="PDB" id="1GSL"/>
    </source>
</evidence>
<evidence type="ECO:0007829" key="4">
    <source>
        <dbReference type="PDB" id="1LED"/>
    </source>
</evidence>
<dbReference type="PIR" id="S13389">
    <property type="entry name" value="S13389"/>
</dbReference>
<dbReference type="PDB" id="1GSL">
    <property type="method" value="X-ray"/>
    <property type="resolution" value="2.00 A"/>
    <property type="chains" value="A=2-243"/>
</dbReference>
<dbReference type="PDB" id="1LEC">
    <property type="method" value="X-ray"/>
    <property type="resolution" value="2.00 A"/>
    <property type="chains" value="A=2-243"/>
</dbReference>
<dbReference type="PDB" id="1LED">
    <property type="method" value="X-ray"/>
    <property type="resolution" value="2.00 A"/>
    <property type="chains" value="A=2-243"/>
</dbReference>
<dbReference type="PDBsum" id="1GSL"/>
<dbReference type="PDBsum" id="1LEC"/>
<dbReference type="PDBsum" id="1LED"/>
<dbReference type="SMR" id="P24146"/>
<dbReference type="UniLectin" id="P24146"/>
<dbReference type="EvolutionaryTrace" id="P24146"/>
<dbReference type="GO" id="GO:0030246">
    <property type="term" value="F:carbohydrate binding"/>
    <property type="evidence" value="ECO:0007669"/>
    <property type="project" value="UniProtKB-KW"/>
</dbReference>
<dbReference type="GO" id="GO:0046872">
    <property type="term" value="F:metal ion binding"/>
    <property type="evidence" value="ECO:0007669"/>
    <property type="project" value="UniProtKB-KW"/>
</dbReference>
<dbReference type="CDD" id="cd06899">
    <property type="entry name" value="lectin_legume_LecRK_Arcelin_ConA"/>
    <property type="match status" value="1"/>
</dbReference>
<dbReference type="Gene3D" id="2.60.120.200">
    <property type="match status" value="1"/>
</dbReference>
<dbReference type="InterPro" id="IPR013320">
    <property type="entry name" value="ConA-like_dom_sf"/>
</dbReference>
<dbReference type="InterPro" id="IPR016363">
    <property type="entry name" value="L-lectin"/>
</dbReference>
<dbReference type="InterPro" id="IPR000985">
    <property type="entry name" value="Lectin_LegA_CS"/>
</dbReference>
<dbReference type="InterPro" id="IPR019825">
    <property type="entry name" value="Lectin_legB_Mn/Ca_BS"/>
</dbReference>
<dbReference type="InterPro" id="IPR001220">
    <property type="entry name" value="Legume_lectin_dom"/>
</dbReference>
<dbReference type="InterPro" id="IPR050258">
    <property type="entry name" value="Leguminous_Lectin"/>
</dbReference>
<dbReference type="PANTHER" id="PTHR32401">
    <property type="entry name" value="CONCANAVALIN A-LIKE LECTIN FAMILY PROTEIN"/>
    <property type="match status" value="1"/>
</dbReference>
<dbReference type="PANTHER" id="PTHR32401:SF47">
    <property type="entry name" value="LEGUME LECTIN DOMAIN-CONTAINING PROTEIN"/>
    <property type="match status" value="1"/>
</dbReference>
<dbReference type="Pfam" id="PF00139">
    <property type="entry name" value="Lectin_legB"/>
    <property type="match status" value="1"/>
</dbReference>
<dbReference type="PIRSF" id="PIRSF002690">
    <property type="entry name" value="L-type_lectin_plant"/>
    <property type="match status" value="1"/>
</dbReference>
<dbReference type="SUPFAM" id="SSF49899">
    <property type="entry name" value="Concanavalin A-like lectins/glucanases"/>
    <property type="match status" value="1"/>
</dbReference>
<dbReference type="PROSITE" id="PS00308">
    <property type="entry name" value="LECTIN_LEGUME_ALPHA"/>
    <property type="match status" value="1"/>
</dbReference>
<dbReference type="PROSITE" id="PS00307">
    <property type="entry name" value="LECTIN_LEGUME_BETA"/>
    <property type="match status" value="1"/>
</dbReference>
<feature type="chain" id="PRO_0000105099" description="Lectin-4">
    <location>
        <begin position="1"/>
        <end position="243"/>
    </location>
</feature>
<feature type="binding site" evidence="1">
    <location>
        <position position="129"/>
    </location>
    <ligand>
        <name>Mn(2+)</name>
        <dbReference type="ChEBI" id="CHEBI:29035"/>
    </ligand>
</feature>
<feature type="binding site" evidence="1">
    <location>
        <position position="131"/>
    </location>
    <ligand>
        <name>Ca(2+)</name>
        <dbReference type="ChEBI" id="CHEBI:29108"/>
    </ligand>
</feature>
<feature type="binding site" evidence="1">
    <location>
        <position position="131"/>
    </location>
    <ligand>
        <name>Mn(2+)</name>
        <dbReference type="ChEBI" id="CHEBI:29035"/>
    </ligand>
</feature>
<feature type="binding site" evidence="1">
    <location>
        <position position="133"/>
    </location>
    <ligand>
        <name>Ca(2+)</name>
        <dbReference type="ChEBI" id="CHEBI:29108"/>
    </ligand>
</feature>
<feature type="binding site" evidence="1">
    <location>
        <position position="135"/>
    </location>
    <ligand>
        <name>Ca(2+)</name>
        <dbReference type="ChEBI" id="CHEBI:29108"/>
    </ligand>
</feature>
<feature type="binding site" evidence="1">
    <location>
        <position position="140"/>
    </location>
    <ligand>
        <name>Ca(2+)</name>
        <dbReference type="ChEBI" id="CHEBI:29108"/>
    </ligand>
</feature>
<feature type="binding site" evidence="1">
    <location>
        <position position="140"/>
    </location>
    <ligand>
        <name>Mn(2+)</name>
        <dbReference type="ChEBI" id="CHEBI:29035"/>
    </ligand>
</feature>
<feature type="binding site" evidence="1">
    <location>
        <position position="145"/>
    </location>
    <ligand>
        <name>Mn(2+)</name>
        <dbReference type="ChEBI" id="CHEBI:29035"/>
    </ligand>
</feature>
<feature type="modified residue" description="Pyrrolidone carboxylic acid" evidence="1">
    <location>
        <position position="1"/>
    </location>
</feature>
<feature type="glycosylation site" description="N-linked (GlcNAc...) asparagine; in alpha chain">
    <location>
        <position position="5"/>
    </location>
</feature>
<feature type="glycosylation site" description="N-linked (GlcNAc...) asparagine">
    <location>
        <position position="18"/>
    </location>
</feature>
<feature type="strand" evidence="3">
    <location>
        <begin position="5"/>
        <end position="9"/>
    </location>
</feature>
<feature type="strand" evidence="3">
    <location>
        <begin position="20"/>
        <end position="26"/>
    </location>
</feature>
<feature type="strand" evidence="3">
    <location>
        <begin position="29"/>
        <end position="31"/>
    </location>
</feature>
<feature type="strand" evidence="3">
    <location>
        <begin position="34"/>
        <end position="36"/>
    </location>
</feature>
<feature type="strand" evidence="3">
    <location>
        <begin position="48"/>
        <end position="58"/>
    </location>
</feature>
<feature type="strand" evidence="3">
    <location>
        <begin position="71"/>
        <end position="86"/>
    </location>
</feature>
<feature type="strand" evidence="3">
    <location>
        <begin position="90"/>
        <end position="97"/>
    </location>
</feature>
<feature type="helix" evidence="3">
    <location>
        <begin position="106"/>
        <end position="108"/>
    </location>
</feature>
<feature type="turn" evidence="3">
    <location>
        <begin position="109"/>
        <end position="111"/>
    </location>
</feature>
<feature type="turn" evidence="3">
    <location>
        <begin position="114"/>
        <end position="118"/>
    </location>
</feature>
<feature type="helix" evidence="3">
    <location>
        <begin position="120"/>
        <end position="122"/>
    </location>
</feature>
<feature type="strand" evidence="3">
    <location>
        <begin position="126"/>
        <end position="131"/>
    </location>
</feature>
<feature type="helix" evidence="3">
    <location>
        <begin position="136"/>
        <end position="138"/>
    </location>
</feature>
<feature type="strand" evidence="3">
    <location>
        <begin position="145"/>
        <end position="154"/>
    </location>
</feature>
<feature type="strand" evidence="3">
    <location>
        <begin position="156"/>
        <end position="160"/>
    </location>
</feature>
<feature type="helix" evidence="3">
    <location>
        <begin position="163"/>
        <end position="166"/>
    </location>
</feature>
<feature type="strand" evidence="3">
    <location>
        <begin position="171"/>
        <end position="179"/>
    </location>
</feature>
<feature type="turn" evidence="3">
    <location>
        <begin position="180"/>
        <end position="183"/>
    </location>
</feature>
<feature type="strand" evidence="3">
    <location>
        <begin position="184"/>
        <end position="191"/>
    </location>
</feature>
<feature type="strand" evidence="3">
    <location>
        <begin position="196"/>
        <end position="202"/>
    </location>
</feature>
<feature type="helix" evidence="3">
    <location>
        <begin position="205"/>
        <end position="208"/>
    </location>
</feature>
<feature type="strand" evidence="3">
    <location>
        <begin position="211"/>
        <end position="221"/>
    </location>
</feature>
<feature type="strand" evidence="3">
    <location>
        <begin position="223"/>
        <end position="237"/>
    </location>
</feature>
<feature type="turn" evidence="4">
    <location>
        <begin position="239"/>
        <end position="242"/>
    </location>
</feature>
<organism>
    <name type="scientific">Griffonia simplicifolia</name>
    <name type="common">Bandeiraea simplicifolia</name>
    <dbReference type="NCBI Taxonomy" id="3850"/>
    <lineage>
        <taxon>Eukaryota</taxon>
        <taxon>Viridiplantae</taxon>
        <taxon>Streptophyta</taxon>
        <taxon>Embryophyta</taxon>
        <taxon>Tracheophyta</taxon>
        <taxon>Spermatophyta</taxon>
        <taxon>Magnoliopsida</taxon>
        <taxon>eudicotyledons</taxon>
        <taxon>Gunneridae</taxon>
        <taxon>Pentapetalae</taxon>
        <taxon>rosids</taxon>
        <taxon>fabids</taxon>
        <taxon>Fabales</taxon>
        <taxon>Fabaceae</taxon>
        <taxon>Cercidoideae</taxon>
        <taxon>Cercideae</taxon>
        <taxon>Cercidinae</taxon>
        <taxon>Griffonia</taxon>
    </lineage>
</organism>
<proteinExistence type="evidence at protein level"/>
<comment type="function">
    <text evidence="1">Lectin which has a strong affinity for both the Lewis b and y human blood-group determinants.</text>
</comment>
<comment type="subunit">
    <text evidence="1">Homodimer of Alpha and Beta forms.</text>
</comment>
<comment type="PTM">
    <text>N-glycosylation of Asn-5 converts form Beta to form Alpha.</text>
</comment>
<comment type="miscellaneous">
    <text evidence="1">Binds one manganese (or another transition metal) ion and one calcium ion. The metal ions are essential for the saccharide-binding and cell-agglutinating activities.</text>
</comment>
<comment type="similarity">
    <text evidence="2">Belongs to the leguminous lectin family.</text>
</comment>
<name>LEC4_GRISI</name>
<accession>P24146</accession>
<keyword id="KW-0002">3D-structure</keyword>
<keyword id="KW-0106">Calcium</keyword>
<keyword id="KW-0903">Direct protein sequencing</keyword>
<keyword id="KW-0325">Glycoprotein</keyword>
<keyword id="KW-0430">Lectin</keyword>
<keyword id="KW-0464">Manganese</keyword>
<keyword id="KW-0479">Metal-binding</keyword>
<keyword id="KW-0873">Pyrrolidone carboxylic acid</keyword>